<reference key="1">
    <citation type="journal article" date="2008" name="J. Bacteriol.">
        <title>The complete genome sequence of Actinobacillus pleuropneumoniae L20 (serotype 5b).</title>
        <authorList>
            <person name="Foote S.J."/>
            <person name="Bosse J.T."/>
            <person name="Bouevitch A.B."/>
            <person name="Langford P.R."/>
            <person name="Young N.M."/>
            <person name="Nash J.H.E."/>
        </authorList>
    </citation>
    <scope>NUCLEOTIDE SEQUENCE [LARGE SCALE GENOMIC DNA]</scope>
    <source>
        <strain>L20</strain>
    </source>
</reference>
<feature type="chain" id="PRO_1000008799" description="Elongation factor G">
    <location>
        <begin position="1"/>
        <end position="701"/>
    </location>
</feature>
<feature type="domain" description="tr-type G">
    <location>
        <begin position="8"/>
        <end position="290"/>
    </location>
</feature>
<feature type="binding site" evidence="1">
    <location>
        <begin position="17"/>
        <end position="24"/>
    </location>
    <ligand>
        <name>GTP</name>
        <dbReference type="ChEBI" id="CHEBI:37565"/>
    </ligand>
</feature>
<feature type="binding site" evidence="1">
    <location>
        <begin position="88"/>
        <end position="92"/>
    </location>
    <ligand>
        <name>GTP</name>
        <dbReference type="ChEBI" id="CHEBI:37565"/>
    </ligand>
</feature>
<feature type="binding site" evidence="1">
    <location>
        <begin position="142"/>
        <end position="145"/>
    </location>
    <ligand>
        <name>GTP</name>
        <dbReference type="ChEBI" id="CHEBI:37565"/>
    </ligand>
</feature>
<dbReference type="EMBL" id="CP000569">
    <property type="protein sequence ID" value="ABN74483.1"/>
    <property type="molecule type" value="Genomic_DNA"/>
</dbReference>
<dbReference type="RefSeq" id="WP_005620535.1">
    <property type="nucleotide sequence ID" value="NC_009053.1"/>
</dbReference>
<dbReference type="SMR" id="A3N247"/>
<dbReference type="STRING" id="416269.APL_1399"/>
<dbReference type="EnsemblBacteria" id="ABN74483">
    <property type="protein sequence ID" value="ABN74483"/>
    <property type="gene ID" value="APL_1399"/>
</dbReference>
<dbReference type="GeneID" id="48599747"/>
<dbReference type="KEGG" id="apl:APL_1399"/>
<dbReference type="eggNOG" id="COG0480">
    <property type="taxonomic scope" value="Bacteria"/>
</dbReference>
<dbReference type="HOGENOM" id="CLU_002794_4_1_6"/>
<dbReference type="Proteomes" id="UP000001432">
    <property type="component" value="Chromosome"/>
</dbReference>
<dbReference type="GO" id="GO:0005737">
    <property type="term" value="C:cytoplasm"/>
    <property type="evidence" value="ECO:0007669"/>
    <property type="project" value="UniProtKB-SubCell"/>
</dbReference>
<dbReference type="GO" id="GO:0005525">
    <property type="term" value="F:GTP binding"/>
    <property type="evidence" value="ECO:0007669"/>
    <property type="project" value="UniProtKB-UniRule"/>
</dbReference>
<dbReference type="GO" id="GO:0003924">
    <property type="term" value="F:GTPase activity"/>
    <property type="evidence" value="ECO:0007669"/>
    <property type="project" value="InterPro"/>
</dbReference>
<dbReference type="GO" id="GO:0097216">
    <property type="term" value="F:guanosine tetraphosphate binding"/>
    <property type="evidence" value="ECO:0007669"/>
    <property type="project" value="UniProtKB-ARBA"/>
</dbReference>
<dbReference type="GO" id="GO:0003746">
    <property type="term" value="F:translation elongation factor activity"/>
    <property type="evidence" value="ECO:0007669"/>
    <property type="project" value="UniProtKB-UniRule"/>
</dbReference>
<dbReference type="GO" id="GO:0032790">
    <property type="term" value="P:ribosome disassembly"/>
    <property type="evidence" value="ECO:0007669"/>
    <property type="project" value="TreeGrafter"/>
</dbReference>
<dbReference type="CDD" id="cd01886">
    <property type="entry name" value="EF-G"/>
    <property type="match status" value="1"/>
</dbReference>
<dbReference type="CDD" id="cd16262">
    <property type="entry name" value="EFG_III"/>
    <property type="match status" value="1"/>
</dbReference>
<dbReference type="CDD" id="cd01434">
    <property type="entry name" value="EFG_mtEFG1_IV"/>
    <property type="match status" value="1"/>
</dbReference>
<dbReference type="CDD" id="cd03713">
    <property type="entry name" value="EFG_mtEFG_C"/>
    <property type="match status" value="1"/>
</dbReference>
<dbReference type="CDD" id="cd04088">
    <property type="entry name" value="EFG_mtEFG_II"/>
    <property type="match status" value="1"/>
</dbReference>
<dbReference type="FunFam" id="2.40.30.10:FF:000006">
    <property type="entry name" value="Elongation factor G"/>
    <property type="match status" value="1"/>
</dbReference>
<dbReference type="FunFam" id="3.30.230.10:FF:000003">
    <property type="entry name" value="Elongation factor G"/>
    <property type="match status" value="1"/>
</dbReference>
<dbReference type="FunFam" id="3.30.70.240:FF:000001">
    <property type="entry name" value="Elongation factor G"/>
    <property type="match status" value="1"/>
</dbReference>
<dbReference type="FunFam" id="3.30.70.870:FF:000001">
    <property type="entry name" value="Elongation factor G"/>
    <property type="match status" value="1"/>
</dbReference>
<dbReference type="FunFam" id="3.40.50.300:FF:000029">
    <property type="entry name" value="Elongation factor G"/>
    <property type="match status" value="1"/>
</dbReference>
<dbReference type="Gene3D" id="3.30.230.10">
    <property type="match status" value="1"/>
</dbReference>
<dbReference type="Gene3D" id="3.30.70.240">
    <property type="match status" value="1"/>
</dbReference>
<dbReference type="Gene3D" id="3.30.70.870">
    <property type="entry name" value="Elongation Factor G (Translational Gtpase), domain 3"/>
    <property type="match status" value="1"/>
</dbReference>
<dbReference type="Gene3D" id="3.40.50.300">
    <property type="entry name" value="P-loop containing nucleotide triphosphate hydrolases"/>
    <property type="match status" value="1"/>
</dbReference>
<dbReference type="Gene3D" id="2.40.30.10">
    <property type="entry name" value="Translation factors"/>
    <property type="match status" value="1"/>
</dbReference>
<dbReference type="HAMAP" id="MF_00054_B">
    <property type="entry name" value="EF_G_EF_2_B"/>
    <property type="match status" value="1"/>
</dbReference>
<dbReference type="InterPro" id="IPR041095">
    <property type="entry name" value="EFG_II"/>
</dbReference>
<dbReference type="InterPro" id="IPR009022">
    <property type="entry name" value="EFG_III"/>
</dbReference>
<dbReference type="InterPro" id="IPR035647">
    <property type="entry name" value="EFG_III/V"/>
</dbReference>
<dbReference type="InterPro" id="IPR047872">
    <property type="entry name" value="EFG_IV"/>
</dbReference>
<dbReference type="InterPro" id="IPR035649">
    <property type="entry name" value="EFG_V"/>
</dbReference>
<dbReference type="InterPro" id="IPR000640">
    <property type="entry name" value="EFG_V-like"/>
</dbReference>
<dbReference type="InterPro" id="IPR004161">
    <property type="entry name" value="EFTu-like_2"/>
</dbReference>
<dbReference type="InterPro" id="IPR031157">
    <property type="entry name" value="G_TR_CS"/>
</dbReference>
<dbReference type="InterPro" id="IPR027417">
    <property type="entry name" value="P-loop_NTPase"/>
</dbReference>
<dbReference type="InterPro" id="IPR020568">
    <property type="entry name" value="Ribosomal_Su5_D2-typ_SF"/>
</dbReference>
<dbReference type="InterPro" id="IPR014721">
    <property type="entry name" value="Ribsml_uS5_D2-typ_fold_subgr"/>
</dbReference>
<dbReference type="InterPro" id="IPR005225">
    <property type="entry name" value="Small_GTP-bd"/>
</dbReference>
<dbReference type="InterPro" id="IPR000795">
    <property type="entry name" value="T_Tr_GTP-bd_dom"/>
</dbReference>
<dbReference type="InterPro" id="IPR009000">
    <property type="entry name" value="Transl_B-barrel_sf"/>
</dbReference>
<dbReference type="InterPro" id="IPR004540">
    <property type="entry name" value="Transl_elong_EFG/EF2"/>
</dbReference>
<dbReference type="InterPro" id="IPR005517">
    <property type="entry name" value="Transl_elong_EFG/EF2_IV"/>
</dbReference>
<dbReference type="NCBIfam" id="TIGR00484">
    <property type="entry name" value="EF-G"/>
    <property type="match status" value="1"/>
</dbReference>
<dbReference type="NCBIfam" id="NF009381">
    <property type="entry name" value="PRK12740.1-5"/>
    <property type="match status" value="1"/>
</dbReference>
<dbReference type="NCBIfam" id="TIGR00231">
    <property type="entry name" value="small_GTP"/>
    <property type="match status" value="1"/>
</dbReference>
<dbReference type="PANTHER" id="PTHR43261:SF1">
    <property type="entry name" value="RIBOSOME-RELEASING FACTOR 2, MITOCHONDRIAL"/>
    <property type="match status" value="1"/>
</dbReference>
<dbReference type="PANTHER" id="PTHR43261">
    <property type="entry name" value="TRANSLATION ELONGATION FACTOR G-RELATED"/>
    <property type="match status" value="1"/>
</dbReference>
<dbReference type="Pfam" id="PF00679">
    <property type="entry name" value="EFG_C"/>
    <property type="match status" value="1"/>
</dbReference>
<dbReference type="Pfam" id="PF14492">
    <property type="entry name" value="EFG_III"/>
    <property type="match status" value="1"/>
</dbReference>
<dbReference type="Pfam" id="PF03764">
    <property type="entry name" value="EFG_IV"/>
    <property type="match status" value="1"/>
</dbReference>
<dbReference type="Pfam" id="PF00009">
    <property type="entry name" value="GTP_EFTU"/>
    <property type="match status" value="1"/>
</dbReference>
<dbReference type="Pfam" id="PF03144">
    <property type="entry name" value="GTP_EFTU_D2"/>
    <property type="match status" value="1"/>
</dbReference>
<dbReference type="PRINTS" id="PR00315">
    <property type="entry name" value="ELONGATNFCT"/>
</dbReference>
<dbReference type="SMART" id="SM00838">
    <property type="entry name" value="EFG_C"/>
    <property type="match status" value="1"/>
</dbReference>
<dbReference type="SMART" id="SM00889">
    <property type="entry name" value="EFG_IV"/>
    <property type="match status" value="1"/>
</dbReference>
<dbReference type="SUPFAM" id="SSF54980">
    <property type="entry name" value="EF-G C-terminal domain-like"/>
    <property type="match status" value="2"/>
</dbReference>
<dbReference type="SUPFAM" id="SSF52540">
    <property type="entry name" value="P-loop containing nucleoside triphosphate hydrolases"/>
    <property type="match status" value="1"/>
</dbReference>
<dbReference type="SUPFAM" id="SSF54211">
    <property type="entry name" value="Ribosomal protein S5 domain 2-like"/>
    <property type="match status" value="1"/>
</dbReference>
<dbReference type="SUPFAM" id="SSF50447">
    <property type="entry name" value="Translation proteins"/>
    <property type="match status" value="1"/>
</dbReference>
<dbReference type="PROSITE" id="PS00301">
    <property type="entry name" value="G_TR_1"/>
    <property type="match status" value="1"/>
</dbReference>
<dbReference type="PROSITE" id="PS51722">
    <property type="entry name" value="G_TR_2"/>
    <property type="match status" value="1"/>
</dbReference>
<protein>
    <recommendedName>
        <fullName evidence="1">Elongation factor G</fullName>
        <shortName evidence="1">EF-G</shortName>
    </recommendedName>
</protein>
<gene>
    <name evidence="1" type="primary">fusA</name>
    <name type="ordered locus">APL_1399</name>
</gene>
<keyword id="KW-0963">Cytoplasm</keyword>
<keyword id="KW-0251">Elongation factor</keyword>
<keyword id="KW-0342">GTP-binding</keyword>
<keyword id="KW-0547">Nucleotide-binding</keyword>
<keyword id="KW-0648">Protein biosynthesis</keyword>
<keyword id="KW-1185">Reference proteome</keyword>
<evidence type="ECO:0000255" key="1">
    <source>
        <dbReference type="HAMAP-Rule" id="MF_00054"/>
    </source>
</evidence>
<proteinExistence type="inferred from homology"/>
<name>EFG_ACTP2</name>
<comment type="function">
    <text evidence="1">Catalyzes the GTP-dependent ribosomal translocation step during translation elongation. During this step, the ribosome changes from the pre-translocational (PRE) to the post-translocational (POST) state as the newly formed A-site-bound peptidyl-tRNA and P-site-bound deacylated tRNA move to the P and E sites, respectively. Catalyzes the coordinated movement of the two tRNA molecules, the mRNA and conformational changes in the ribosome.</text>
</comment>
<comment type="subcellular location">
    <subcellularLocation>
        <location evidence="1">Cytoplasm</location>
    </subcellularLocation>
</comment>
<comment type="similarity">
    <text evidence="1">Belongs to the TRAFAC class translation factor GTPase superfamily. Classic translation factor GTPase family. EF-G/EF-2 subfamily.</text>
</comment>
<accession>A3N247</accession>
<sequence length="701" mass="77279">MARTTPISRYRNIGISAHIDAGKTTTSERILFYTGVSHKLGEVHDGAATMDWMEQEQERGITITSAATTAFWSGMSKQFEQHRINVIDTPGHVDFTIEVERSMRVLDGAVMVYCAVGGVQPQSETVWRQANKYQVPRIAFVNKMDRTGANFLRVVDQIKTRLGGNSVALQLPIGSEDNFKGVVDLIKMKAINWNEADQGMTFTYEDIPADMLEACEERRAMLVEAAAEASEELMEKFFSGEELTEEEIKTALRQRVLANEIIPVCCGSAFKNKGVQAMLDAVIEYLPAPTDIPAIKGINEDETEGERHASDDEPFAALAFKIATDPFVGNLTFFRVYSGVINSGDTVYNSVKQKRERFGRIVQMHANKREEIKEVRAGDIAAAIGLKDVGTGDTLCAQDAPIILERMEFPEPVISVAVEPKTKADQEKMGLALGRLAQEDPSFRVHTDEESGETIISGMGELHLDIIVDRMRREFKVEANIGKPQVSYRETIRTTVKDVEGKHAKQSGGRGQYGHVVIDLYPLEPEGPGYEFVNEIKGGVIPGEFIPAVDKGIQEQLKSGPLAGYPVVDVGVRLHFGSYHDVDSSELAFKLAASLAFKSAFGRANPVLLEPIMKVEVETPPDYVGDVIGDLSRRRAMVNGQEANEFVVKINAEVPLSEMFGYATDLRSQTQGRASYSMEPLKYAEAPTSVANAIIEARKAK</sequence>
<organism>
    <name type="scientific">Actinobacillus pleuropneumoniae serotype 5b (strain L20)</name>
    <dbReference type="NCBI Taxonomy" id="416269"/>
    <lineage>
        <taxon>Bacteria</taxon>
        <taxon>Pseudomonadati</taxon>
        <taxon>Pseudomonadota</taxon>
        <taxon>Gammaproteobacteria</taxon>
        <taxon>Pasteurellales</taxon>
        <taxon>Pasteurellaceae</taxon>
        <taxon>Actinobacillus</taxon>
    </lineage>
</organism>